<sequence>MNDLKLLRSKLSTETIEELYKNLNLLKKELFNLRFQQALGELKNTSRFSLVKKSIARIKTELTKRSNSEEY</sequence>
<proteinExistence type="inferred from homology"/>
<reference key="1">
    <citation type="journal article" date="2005" name="PLoS Biol.">
        <title>The genome sequence of Rickettsia felis identifies the first putative conjugative plasmid in an obligate intracellular parasite.</title>
        <authorList>
            <person name="Ogata H."/>
            <person name="Renesto P."/>
            <person name="Audic S."/>
            <person name="Robert C."/>
            <person name="Blanc G."/>
            <person name="Fournier P.-E."/>
            <person name="Parinello H."/>
            <person name="Claverie J.-M."/>
            <person name="Raoult D."/>
        </authorList>
    </citation>
    <scope>NUCLEOTIDE SEQUENCE [LARGE SCALE GENOMIC DNA]</scope>
    <source>
        <strain>ATCC VR-1525 / URRWXCal2</strain>
    </source>
</reference>
<keyword id="KW-0687">Ribonucleoprotein</keyword>
<keyword id="KW-0689">Ribosomal protein</keyword>
<organism>
    <name type="scientific">Rickettsia felis (strain ATCC VR-1525 / URRWXCal2)</name>
    <name type="common">Rickettsia azadi</name>
    <dbReference type="NCBI Taxonomy" id="315456"/>
    <lineage>
        <taxon>Bacteria</taxon>
        <taxon>Pseudomonadati</taxon>
        <taxon>Pseudomonadota</taxon>
        <taxon>Alphaproteobacteria</taxon>
        <taxon>Rickettsiales</taxon>
        <taxon>Rickettsiaceae</taxon>
        <taxon>Rickettsieae</taxon>
        <taxon>Rickettsia</taxon>
        <taxon>spotted fever group</taxon>
    </lineage>
</organism>
<gene>
    <name evidence="1" type="primary">rpmC</name>
    <name type="ordered locus">RF_0286</name>
</gene>
<name>RL29_RICFE</name>
<protein>
    <recommendedName>
        <fullName evidence="1">Large ribosomal subunit protein uL29</fullName>
    </recommendedName>
    <alternativeName>
        <fullName evidence="2">50S ribosomal protein L29</fullName>
    </alternativeName>
</protein>
<evidence type="ECO:0000255" key="1">
    <source>
        <dbReference type="HAMAP-Rule" id="MF_00374"/>
    </source>
</evidence>
<evidence type="ECO:0000305" key="2"/>
<dbReference type="EMBL" id="CP000053">
    <property type="protein sequence ID" value="AAY61137.1"/>
    <property type="molecule type" value="Genomic_DNA"/>
</dbReference>
<dbReference type="SMR" id="Q4UMS1"/>
<dbReference type="STRING" id="315456.RF_0286"/>
<dbReference type="KEGG" id="rfe:RF_0286"/>
<dbReference type="eggNOG" id="COG0255">
    <property type="taxonomic scope" value="Bacteria"/>
</dbReference>
<dbReference type="HOGENOM" id="CLU_158491_1_0_5"/>
<dbReference type="OrthoDB" id="9815192at2"/>
<dbReference type="Proteomes" id="UP000008548">
    <property type="component" value="Chromosome"/>
</dbReference>
<dbReference type="GO" id="GO:0022625">
    <property type="term" value="C:cytosolic large ribosomal subunit"/>
    <property type="evidence" value="ECO:0007669"/>
    <property type="project" value="TreeGrafter"/>
</dbReference>
<dbReference type="GO" id="GO:0003735">
    <property type="term" value="F:structural constituent of ribosome"/>
    <property type="evidence" value="ECO:0007669"/>
    <property type="project" value="InterPro"/>
</dbReference>
<dbReference type="GO" id="GO:0006412">
    <property type="term" value="P:translation"/>
    <property type="evidence" value="ECO:0007669"/>
    <property type="project" value="UniProtKB-UniRule"/>
</dbReference>
<dbReference type="CDD" id="cd00427">
    <property type="entry name" value="Ribosomal_L29_HIP"/>
    <property type="match status" value="1"/>
</dbReference>
<dbReference type="FunFam" id="1.10.287.310:FF:000001">
    <property type="entry name" value="50S ribosomal protein L29"/>
    <property type="match status" value="1"/>
</dbReference>
<dbReference type="Gene3D" id="1.10.287.310">
    <property type="match status" value="1"/>
</dbReference>
<dbReference type="HAMAP" id="MF_00374">
    <property type="entry name" value="Ribosomal_uL29"/>
    <property type="match status" value="1"/>
</dbReference>
<dbReference type="InterPro" id="IPR050063">
    <property type="entry name" value="Ribosomal_protein_uL29"/>
</dbReference>
<dbReference type="InterPro" id="IPR001854">
    <property type="entry name" value="Ribosomal_uL29"/>
</dbReference>
<dbReference type="InterPro" id="IPR018254">
    <property type="entry name" value="Ribosomal_uL29_CS"/>
</dbReference>
<dbReference type="InterPro" id="IPR036049">
    <property type="entry name" value="Ribosomal_uL29_sf"/>
</dbReference>
<dbReference type="NCBIfam" id="TIGR00012">
    <property type="entry name" value="L29"/>
    <property type="match status" value="1"/>
</dbReference>
<dbReference type="PANTHER" id="PTHR10916">
    <property type="entry name" value="60S RIBOSOMAL PROTEIN L35/50S RIBOSOMAL PROTEIN L29"/>
    <property type="match status" value="1"/>
</dbReference>
<dbReference type="PANTHER" id="PTHR10916:SF0">
    <property type="entry name" value="LARGE RIBOSOMAL SUBUNIT PROTEIN UL29C"/>
    <property type="match status" value="1"/>
</dbReference>
<dbReference type="Pfam" id="PF00831">
    <property type="entry name" value="Ribosomal_L29"/>
    <property type="match status" value="1"/>
</dbReference>
<dbReference type="SUPFAM" id="SSF46561">
    <property type="entry name" value="Ribosomal protein L29 (L29p)"/>
    <property type="match status" value="1"/>
</dbReference>
<dbReference type="PROSITE" id="PS00579">
    <property type="entry name" value="RIBOSOMAL_L29"/>
    <property type="match status" value="1"/>
</dbReference>
<comment type="similarity">
    <text evidence="1">Belongs to the universal ribosomal protein uL29 family.</text>
</comment>
<feature type="chain" id="PRO_0000130443" description="Large ribosomal subunit protein uL29">
    <location>
        <begin position="1"/>
        <end position="71"/>
    </location>
</feature>
<accession>Q4UMS1</accession>